<reference key="1">
    <citation type="journal article" date="2003" name="Proc. Natl. Acad. Sci. U.S.A.">
        <title>The complete genome sequence of Mycobacterium bovis.</title>
        <authorList>
            <person name="Garnier T."/>
            <person name="Eiglmeier K."/>
            <person name="Camus J.-C."/>
            <person name="Medina N."/>
            <person name="Mansoor H."/>
            <person name="Pryor M."/>
            <person name="Duthoy S."/>
            <person name="Grondin S."/>
            <person name="Lacroix C."/>
            <person name="Monsempe C."/>
            <person name="Simon S."/>
            <person name="Harris B."/>
            <person name="Atkin R."/>
            <person name="Doggett J."/>
            <person name="Mayes R."/>
            <person name="Keating L."/>
            <person name="Wheeler P.R."/>
            <person name="Parkhill J."/>
            <person name="Barrell B.G."/>
            <person name="Cole S.T."/>
            <person name="Gordon S.V."/>
            <person name="Hewinson R.G."/>
        </authorList>
    </citation>
    <scope>NUCLEOTIDE SEQUENCE [LARGE SCALE GENOMIC DNA]</scope>
    <source>
        <strain>ATCC BAA-935 / AF2122/97</strain>
    </source>
</reference>
<reference key="2">
    <citation type="journal article" date="2017" name="Genome Announc.">
        <title>Updated reference genome sequence and annotation of Mycobacterium bovis AF2122/97.</title>
        <authorList>
            <person name="Malone K.M."/>
            <person name="Farrell D."/>
            <person name="Stuber T.P."/>
            <person name="Schubert O.T."/>
            <person name="Aebersold R."/>
            <person name="Robbe-Austerman S."/>
            <person name="Gordon S.V."/>
        </authorList>
    </citation>
    <scope>NUCLEOTIDE SEQUENCE [LARGE SCALE GENOMIC DNA]</scope>
    <scope>GENOME REANNOTATION</scope>
    <source>
        <strain>ATCC BAA-935 / AF2122/97</strain>
    </source>
</reference>
<evidence type="ECO:0000255" key="1">
    <source>
        <dbReference type="HAMAP-Rule" id="MF_00158"/>
    </source>
</evidence>
<protein>
    <recommendedName>
        <fullName evidence="1">Pantothenate synthetase</fullName>
        <shortName evidence="1">PS</shortName>
        <ecNumber evidence="1">6.3.2.1</ecNumber>
    </recommendedName>
    <alternativeName>
        <fullName evidence="1">Pantoate--beta-alanine ligase</fullName>
    </alternativeName>
    <alternativeName>
        <fullName evidence="1">Pantoate-activating enzyme</fullName>
    </alternativeName>
</protein>
<dbReference type="EC" id="6.3.2.1" evidence="1"/>
<dbReference type="EMBL" id="LT708304">
    <property type="protein sequence ID" value="SIU02260.1"/>
    <property type="molecule type" value="Genomic_DNA"/>
</dbReference>
<dbReference type="RefSeq" id="NP_857271.1">
    <property type="nucleotide sequence ID" value="NC_002945.3"/>
</dbReference>
<dbReference type="RefSeq" id="WP_003419526.1">
    <property type="nucleotide sequence ID" value="NC_002945.4"/>
</dbReference>
<dbReference type="SMR" id="P0A5R1"/>
<dbReference type="KEGG" id="mbo:BQ2027_MB3632C"/>
<dbReference type="PATRIC" id="fig|233413.5.peg.3978"/>
<dbReference type="UniPathway" id="UPA00028">
    <property type="reaction ID" value="UER00005"/>
</dbReference>
<dbReference type="Proteomes" id="UP000001419">
    <property type="component" value="Chromosome"/>
</dbReference>
<dbReference type="GO" id="GO:0005829">
    <property type="term" value="C:cytosol"/>
    <property type="evidence" value="ECO:0007669"/>
    <property type="project" value="TreeGrafter"/>
</dbReference>
<dbReference type="GO" id="GO:0005524">
    <property type="term" value="F:ATP binding"/>
    <property type="evidence" value="ECO:0007669"/>
    <property type="project" value="UniProtKB-KW"/>
</dbReference>
<dbReference type="GO" id="GO:0004592">
    <property type="term" value="F:pantoate-beta-alanine ligase activity"/>
    <property type="evidence" value="ECO:0007669"/>
    <property type="project" value="UniProtKB-UniRule"/>
</dbReference>
<dbReference type="GO" id="GO:0015940">
    <property type="term" value="P:pantothenate biosynthetic process"/>
    <property type="evidence" value="ECO:0007669"/>
    <property type="project" value="UniProtKB-UniRule"/>
</dbReference>
<dbReference type="CDD" id="cd00560">
    <property type="entry name" value="PanC"/>
    <property type="match status" value="1"/>
</dbReference>
<dbReference type="FunFam" id="3.30.1300.10:FF:000005">
    <property type="entry name" value="Pantothenate synthetase"/>
    <property type="match status" value="1"/>
</dbReference>
<dbReference type="FunFam" id="3.40.50.620:FF:000114">
    <property type="entry name" value="Pantothenate synthetase"/>
    <property type="match status" value="1"/>
</dbReference>
<dbReference type="Gene3D" id="3.40.50.620">
    <property type="entry name" value="HUPs"/>
    <property type="match status" value="1"/>
</dbReference>
<dbReference type="Gene3D" id="3.30.1300.10">
    <property type="entry name" value="Pantoate-beta-alanine ligase, C-terminal domain"/>
    <property type="match status" value="1"/>
</dbReference>
<dbReference type="HAMAP" id="MF_00158">
    <property type="entry name" value="PanC"/>
    <property type="match status" value="1"/>
</dbReference>
<dbReference type="InterPro" id="IPR003721">
    <property type="entry name" value="Pantoate_ligase"/>
</dbReference>
<dbReference type="InterPro" id="IPR042176">
    <property type="entry name" value="Pantoate_ligase_C"/>
</dbReference>
<dbReference type="InterPro" id="IPR014729">
    <property type="entry name" value="Rossmann-like_a/b/a_fold"/>
</dbReference>
<dbReference type="NCBIfam" id="TIGR00018">
    <property type="entry name" value="panC"/>
    <property type="match status" value="1"/>
</dbReference>
<dbReference type="PANTHER" id="PTHR21299">
    <property type="entry name" value="CYTIDYLATE KINASE/PANTOATE-BETA-ALANINE LIGASE"/>
    <property type="match status" value="1"/>
</dbReference>
<dbReference type="PANTHER" id="PTHR21299:SF1">
    <property type="entry name" value="PANTOATE--BETA-ALANINE LIGASE"/>
    <property type="match status" value="1"/>
</dbReference>
<dbReference type="Pfam" id="PF02569">
    <property type="entry name" value="Pantoate_ligase"/>
    <property type="match status" value="1"/>
</dbReference>
<dbReference type="SUPFAM" id="SSF52374">
    <property type="entry name" value="Nucleotidylyl transferase"/>
    <property type="match status" value="1"/>
</dbReference>
<gene>
    <name evidence="1" type="primary">panC</name>
    <name type="ordered locus">BQ2027_MB3632C</name>
</gene>
<comment type="function">
    <text evidence="1">Catalyzes the condensation of pantoate with beta-alanine in an ATP-dependent reaction via a pantoyl-adenylate intermediate.</text>
</comment>
<comment type="catalytic activity">
    <reaction evidence="1">
        <text>(R)-pantoate + beta-alanine + ATP = (R)-pantothenate + AMP + diphosphate + H(+)</text>
        <dbReference type="Rhea" id="RHEA:10912"/>
        <dbReference type="ChEBI" id="CHEBI:15378"/>
        <dbReference type="ChEBI" id="CHEBI:15980"/>
        <dbReference type="ChEBI" id="CHEBI:29032"/>
        <dbReference type="ChEBI" id="CHEBI:30616"/>
        <dbReference type="ChEBI" id="CHEBI:33019"/>
        <dbReference type="ChEBI" id="CHEBI:57966"/>
        <dbReference type="ChEBI" id="CHEBI:456215"/>
        <dbReference type="EC" id="6.3.2.1"/>
    </reaction>
</comment>
<comment type="pathway">
    <text evidence="1">Cofactor biosynthesis; (R)-pantothenate biosynthesis; (R)-pantothenate from (R)-pantoate and beta-alanine: step 1/1.</text>
</comment>
<comment type="subunit">
    <text evidence="1">Homodimer.</text>
</comment>
<comment type="subcellular location">
    <subcellularLocation>
        <location evidence="1">Cytoplasm</location>
    </subcellularLocation>
</comment>
<comment type="miscellaneous">
    <text evidence="1">The reaction proceeds by a bi uni uni bi ping pong mechanism.</text>
</comment>
<comment type="similarity">
    <text evidence="1">Belongs to the pantothenate synthetase family.</text>
</comment>
<name>PANC_MYCBO</name>
<accession>P0A5R1</accession>
<accession>A0A1R3Y4M8</accession>
<accession>O06280</accession>
<accession>X2BP59</accession>
<proteinExistence type="inferred from homology"/>
<sequence>MTIPAFHPGELNVYSAPGDVADVSRALRLTGRRVMLVPTMGALHEGHLALVRAAKRVPGSVVVVSIFVNPMQFGAGEDLDAYPRTPDDDLAQLRAEGVEIAFTPTTAAMYPDGLRTTVQPGPLAAELEGGPRPTHFAGVLTVVLKLLQIVRPDRVFFGEKDYQQLVLIRQLVADFNLDVAVVGVPTVREADGLAMSSRNRYLDPAQRAAAVALSAALTAAAHAATAGAQAALDAARAVLDAAPGVAVDYLELRDIGLGPMPLNGSGRLLVAARLGTTRLLDNIAIEIGTFAGTDRPDGYRAILESHWRN</sequence>
<organism>
    <name type="scientific">Mycobacterium bovis (strain ATCC BAA-935 / AF2122/97)</name>
    <dbReference type="NCBI Taxonomy" id="233413"/>
    <lineage>
        <taxon>Bacteria</taxon>
        <taxon>Bacillati</taxon>
        <taxon>Actinomycetota</taxon>
        <taxon>Actinomycetes</taxon>
        <taxon>Mycobacteriales</taxon>
        <taxon>Mycobacteriaceae</taxon>
        <taxon>Mycobacterium</taxon>
        <taxon>Mycobacterium tuberculosis complex</taxon>
    </lineage>
</organism>
<feature type="chain" id="PRO_0000128242" description="Pantothenate synthetase">
    <location>
        <begin position="1"/>
        <end position="309"/>
    </location>
</feature>
<feature type="active site" description="Proton donor" evidence="1">
    <location>
        <position position="47"/>
    </location>
</feature>
<feature type="binding site" evidence="1">
    <location>
        <begin position="40"/>
        <end position="47"/>
    </location>
    <ligand>
        <name>ATP</name>
        <dbReference type="ChEBI" id="CHEBI:30616"/>
    </ligand>
</feature>
<feature type="binding site" evidence="1">
    <location>
        <position position="72"/>
    </location>
    <ligand>
        <name>(R)-pantoate</name>
        <dbReference type="ChEBI" id="CHEBI:15980"/>
    </ligand>
</feature>
<feature type="binding site" evidence="1">
    <location>
        <position position="72"/>
    </location>
    <ligand>
        <name>beta-alanine</name>
        <dbReference type="ChEBI" id="CHEBI:57966"/>
    </ligand>
</feature>
<feature type="binding site" evidence="1">
    <location>
        <begin position="158"/>
        <end position="161"/>
    </location>
    <ligand>
        <name>ATP</name>
        <dbReference type="ChEBI" id="CHEBI:30616"/>
    </ligand>
</feature>
<feature type="binding site" evidence="1">
    <location>
        <position position="164"/>
    </location>
    <ligand>
        <name>(R)-pantoate</name>
        <dbReference type="ChEBI" id="CHEBI:15980"/>
    </ligand>
</feature>
<feature type="binding site" evidence="1">
    <location>
        <position position="187"/>
    </location>
    <ligand>
        <name>ATP</name>
        <dbReference type="ChEBI" id="CHEBI:30616"/>
    </ligand>
</feature>
<feature type="binding site" evidence="1">
    <location>
        <begin position="195"/>
        <end position="198"/>
    </location>
    <ligand>
        <name>ATP</name>
        <dbReference type="ChEBI" id="CHEBI:30616"/>
    </ligand>
</feature>
<keyword id="KW-0067">ATP-binding</keyword>
<keyword id="KW-0963">Cytoplasm</keyword>
<keyword id="KW-0436">Ligase</keyword>
<keyword id="KW-0547">Nucleotide-binding</keyword>
<keyword id="KW-0566">Pantothenate biosynthesis</keyword>
<keyword id="KW-1185">Reference proteome</keyword>